<gene>
    <name type="primary">LIN9</name>
    <name type="synonym">BARA</name>
    <name type="synonym">TGS</name>
</gene>
<comment type="function">
    <text evidence="3 4">Acts as a tumor suppressor. Inhibits DNA synthesis. Its ability to inhibit oncogenic transformation is mediated through its association with RB1. Plays a role in the expression of genes required for the G1/S transition.</text>
</comment>
<comment type="subunit">
    <text evidence="3 5 6">Component of the DREAM complex (also named LINC complex) at least composed of E2F4, E2F5, LIN9, LIN37, LIN52, LIN54, MYBL1, MYBL2, RBL1, RBL2, RBBP4, TFDP1 and TFDP2. The complex exists in quiescent cells where it represses cell cycle-dependent genes. It dissociates in S phase when LIN9, LIN37, LIN52 and LIN54 form a subcomplex that binds to MYBL2. Interacts with RB1.</text>
</comment>
<comment type="interaction">
    <interactant intactId="EBI-1389424">
        <id>Q5TKA1</id>
    </interactant>
    <interactant intactId="EBI-448943">
        <id>Q16254</id>
        <label>E2F4</label>
    </interactant>
    <organismsDiffer>false</organismsDiffer>
    <experiments>4</experiments>
</comment>
<comment type="interaction">
    <interactant intactId="EBI-1389424">
        <id>Q5TKA1</id>
    </interactant>
    <interactant intactId="EBI-1389468">
        <id>P10244</id>
        <label>MYBL2</label>
    </interactant>
    <organismsDiffer>false</organismsDiffer>
    <experiments>9</experiments>
</comment>
<comment type="subcellular location">
    <subcellularLocation>
        <location evidence="3 4">Nucleus</location>
        <location evidence="3 4">Nucleoplasm</location>
    </subcellularLocation>
    <text>Found in perinucleolar structures. Associated with chromatin.</text>
</comment>
<comment type="alternative products">
    <event type="alternative splicing"/>
    <isoform>
        <id>Q5TKA1-1</id>
        <name>1</name>
        <name>Lin9-L</name>
        <name>Long form</name>
        <sequence type="displayed"/>
    </isoform>
    <isoform>
        <id>Q5TKA1-2</id>
        <name>2</name>
        <sequence type="described" ref="VSP_020509"/>
    </isoform>
    <isoform>
        <id>Q5TKA1-3</id>
        <name>3</name>
        <name>Lin9-S</name>
        <name>Short form</name>
        <sequence type="described" ref="VSP_020510"/>
    </isoform>
</comment>
<comment type="tissue specificity">
    <text evidence="3">Expressed in thymus and testis.</text>
</comment>
<comment type="similarity">
    <text evidence="10">Belongs to the lin-9 family.</text>
</comment>
<comment type="sequence caution" evidence="10">
    <conflict type="erroneous initiation">
        <sequence resource="EMBL-CDS" id="AAH43444"/>
    </conflict>
</comment>
<comment type="sequence caution" evidence="10">
    <conflict type="erroneous initiation">
        <sequence resource="EMBL-CDS" id="CAD97871"/>
    </conflict>
</comment>
<reference key="1">
    <citation type="journal article" date="2004" name="EMBO J.">
        <title>Inhibition of oncogenic transformation by mammalian Lin-9, a pRB-associated protein.</title>
        <authorList>
            <person name="Gagrica S."/>
            <person name="Hauser S."/>
            <person name="Kolfschoten I."/>
            <person name="Osterloh L."/>
            <person name="Agami R."/>
            <person name="Gaubatz S."/>
        </authorList>
    </citation>
    <scope>NUCLEOTIDE SEQUENCE [MRNA] (ISOFORM 1)</scope>
    <scope>FUNCTION</scope>
    <scope>INTERACTION WITH RB1</scope>
    <scope>SUBCELLULAR LOCATION</scope>
    <scope>TISSUE SPECIFICITY</scope>
    <source>
        <tissue>Cervix carcinoma</tissue>
    </source>
</reference>
<reference key="2">
    <citation type="journal article" date="2006" name="Exp. Cell Res.">
        <title>A mutant allele of BARA/LIN-9 rescues the cdk4-/- phenotype by releasing the repression on E2F-regulated genes.</title>
        <authorList>
            <person name="Sandoval R."/>
            <person name="Xue J."/>
            <person name="Tian X."/>
            <person name="Barrett K."/>
            <person name="Pilkinton M."/>
            <person name="Ucker D.S."/>
            <person name="Raychaudhuri P."/>
            <person name="Kineman R.D."/>
            <person name="Luque R.M."/>
            <person name="Baida G."/>
            <person name="Zou X."/>
            <person name="Valli V.E."/>
            <person name="Cook J.L."/>
            <person name="Kiyokawa H."/>
            <person name="Colamonici O.R."/>
        </authorList>
    </citation>
    <scope>NUCLEOTIDE SEQUENCE [MRNA] (ISOFORMS 1 AND 3)</scope>
    <scope>FUNCTION</scope>
    <scope>SUBCELLULAR LOCATION</scope>
    <source>
        <tissue>Myeloma</tissue>
    </source>
</reference>
<reference key="3">
    <citation type="journal article" date="2004" name="Nat. Genet.">
        <title>Complete sequencing and characterization of 21,243 full-length human cDNAs.</title>
        <authorList>
            <person name="Ota T."/>
            <person name="Suzuki Y."/>
            <person name="Nishikawa T."/>
            <person name="Otsuki T."/>
            <person name="Sugiyama T."/>
            <person name="Irie R."/>
            <person name="Wakamatsu A."/>
            <person name="Hayashi K."/>
            <person name="Sato H."/>
            <person name="Nagai K."/>
            <person name="Kimura K."/>
            <person name="Makita H."/>
            <person name="Sekine M."/>
            <person name="Obayashi M."/>
            <person name="Nishi T."/>
            <person name="Shibahara T."/>
            <person name="Tanaka T."/>
            <person name="Ishii S."/>
            <person name="Yamamoto J."/>
            <person name="Saito K."/>
            <person name="Kawai Y."/>
            <person name="Isono Y."/>
            <person name="Nakamura Y."/>
            <person name="Nagahari K."/>
            <person name="Murakami K."/>
            <person name="Yasuda T."/>
            <person name="Iwayanagi T."/>
            <person name="Wagatsuma M."/>
            <person name="Shiratori A."/>
            <person name="Sudo H."/>
            <person name="Hosoiri T."/>
            <person name="Kaku Y."/>
            <person name="Kodaira H."/>
            <person name="Kondo H."/>
            <person name="Sugawara M."/>
            <person name="Takahashi M."/>
            <person name="Kanda K."/>
            <person name="Yokoi T."/>
            <person name="Furuya T."/>
            <person name="Kikkawa E."/>
            <person name="Omura Y."/>
            <person name="Abe K."/>
            <person name="Kamihara K."/>
            <person name="Katsuta N."/>
            <person name="Sato K."/>
            <person name="Tanikawa M."/>
            <person name="Yamazaki M."/>
            <person name="Ninomiya K."/>
            <person name="Ishibashi T."/>
            <person name="Yamashita H."/>
            <person name="Murakawa K."/>
            <person name="Fujimori K."/>
            <person name="Tanai H."/>
            <person name="Kimata M."/>
            <person name="Watanabe M."/>
            <person name="Hiraoka S."/>
            <person name="Chiba Y."/>
            <person name="Ishida S."/>
            <person name="Ono Y."/>
            <person name="Takiguchi S."/>
            <person name="Watanabe S."/>
            <person name="Yosida M."/>
            <person name="Hotuta T."/>
            <person name="Kusano J."/>
            <person name="Kanehori K."/>
            <person name="Takahashi-Fujii A."/>
            <person name="Hara H."/>
            <person name="Tanase T.-O."/>
            <person name="Nomura Y."/>
            <person name="Togiya S."/>
            <person name="Komai F."/>
            <person name="Hara R."/>
            <person name="Takeuchi K."/>
            <person name="Arita M."/>
            <person name="Imose N."/>
            <person name="Musashino K."/>
            <person name="Yuuki H."/>
            <person name="Oshima A."/>
            <person name="Sasaki N."/>
            <person name="Aotsuka S."/>
            <person name="Yoshikawa Y."/>
            <person name="Matsunawa H."/>
            <person name="Ichihara T."/>
            <person name="Shiohata N."/>
            <person name="Sano S."/>
            <person name="Moriya S."/>
            <person name="Momiyama H."/>
            <person name="Satoh N."/>
            <person name="Takami S."/>
            <person name="Terashima Y."/>
            <person name="Suzuki O."/>
            <person name="Nakagawa S."/>
            <person name="Senoh A."/>
            <person name="Mizoguchi H."/>
            <person name="Goto Y."/>
            <person name="Shimizu F."/>
            <person name="Wakebe H."/>
            <person name="Hishigaki H."/>
            <person name="Watanabe T."/>
            <person name="Sugiyama A."/>
            <person name="Takemoto M."/>
            <person name="Kawakami B."/>
            <person name="Yamazaki M."/>
            <person name="Watanabe K."/>
            <person name="Kumagai A."/>
            <person name="Itakura S."/>
            <person name="Fukuzumi Y."/>
            <person name="Fujimori Y."/>
            <person name="Komiyama M."/>
            <person name="Tashiro H."/>
            <person name="Tanigami A."/>
            <person name="Fujiwara T."/>
            <person name="Ono T."/>
            <person name="Yamada K."/>
            <person name="Fujii Y."/>
            <person name="Ozaki K."/>
            <person name="Hirao M."/>
            <person name="Ohmori Y."/>
            <person name="Kawabata A."/>
            <person name="Hikiji T."/>
            <person name="Kobatake N."/>
            <person name="Inagaki H."/>
            <person name="Ikema Y."/>
            <person name="Okamoto S."/>
            <person name="Okitani R."/>
            <person name="Kawakami T."/>
            <person name="Noguchi S."/>
            <person name="Itoh T."/>
            <person name="Shigeta K."/>
            <person name="Senba T."/>
            <person name="Matsumura K."/>
            <person name="Nakajima Y."/>
            <person name="Mizuno T."/>
            <person name="Morinaga M."/>
            <person name="Sasaki M."/>
            <person name="Togashi T."/>
            <person name="Oyama M."/>
            <person name="Hata H."/>
            <person name="Watanabe M."/>
            <person name="Komatsu T."/>
            <person name="Mizushima-Sugano J."/>
            <person name="Satoh T."/>
            <person name="Shirai Y."/>
            <person name="Takahashi Y."/>
            <person name="Nakagawa K."/>
            <person name="Okumura K."/>
            <person name="Nagase T."/>
            <person name="Nomura N."/>
            <person name="Kikuchi H."/>
            <person name="Masuho Y."/>
            <person name="Yamashita R."/>
            <person name="Nakai K."/>
            <person name="Yada T."/>
            <person name="Nakamura Y."/>
            <person name="Ohara O."/>
            <person name="Isogai T."/>
            <person name="Sugano S."/>
        </authorList>
    </citation>
    <scope>NUCLEOTIDE SEQUENCE [LARGE SCALE MRNA] (ISOFORM 3)</scope>
    <source>
        <tissue>Thymus</tissue>
    </source>
</reference>
<reference key="4">
    <citation type="journal article" date="2007" name="BMC Genomics">
        <title>The full-ORF clone resource of the German cDNA consortium.</title>
        <authorList>
            <person name="Bechtel S."/>
            <person name="Rosenfelder H."/>
            <person name="Duda A."/>
            <person name="Schmidt C.P."/>
            <person name="Ernst U."/>
            <person name="Wellenreuther R."/>
            <person name="Mehrle A."/>
            <person name="Schuster C."/>
            <person name="Bahr A."/>
            <person name="Bloecker H."/>
            <person name="Heubner D."/>
            <person name="Hoerlein A."/>
            <person name="Michel G."/>
            <person name="Wedler H."/>
            <person name="Koehrer K."/>
            <person name="Ottenwaelder B."/>
            <person name="Poustka A."/>
            <person name="Wiemann S."/>
            <person name="Schupp I."/>
        </authorList>
    </citation>
    <scope>NUCLEOTIDE SEQUENCE [LARGE SCALE MRNA] (ISOFORM 1)</scope>
    <source>
        <tissue>Heart</tissue>
    </source>
</reference>
<reference key="5">
    <citation type="journal article" date="2004" name="Genome Res.">
        <title>The status, quality, and expansion of the NIH full-length cDNA project: the Mammalian Gene Collection (MGC).</title>
        <authorList>
            <consortium name="The MGC Project Team"/>
        </authorList>
    </citation>
    <scope>NUCLEOTIDE SEQUENCE [LARGE SCALE MRNA] (ISOFORMS 1 AND 2)</scope>
    <source>
        <tissue>Testis</tissue>
    </source>
</reference>
<reference key="6">
    <citation type="journal article" date="2007" name="Cell Cycle">
        <title>LINC, a human complex that is related to pRB-containing complexes in invertebrates regulates the expression of G2/M genes.</title>
        <authorList>
            <person name="Schmit F."/>
            <person name="Korenjak M."/>
            <person name="Mannefeld M."/>
            <person name="Schmitt K."/>
            <person name="Franke C."/>
            <person name="von Eyss B."/>
            <person name="Gagrica S."/>
            <person name="Haenel F."/>
            <person name="Brehm A."/>
            <person name="Gaubatz S."/>
        </authorList>
    </citation>
    <scope>IDENTIFICATION IN THE DREAM COMPLEX</scope>
</reference>
<reference key="7">
    <citation type="journal article" date="2007" name="Mol. Cell">
        <title>Evolutionarily conserved multisubunit RBL2/p130 and E2F4 protein complex represses human cell cycle-dependent genes in quiescence.</title>
        <authorList>
            <person name="Litovchick L."/>
            <person name="Sadasivam S."/>
            <person name="Florens L."/>
            <person name="Zhu X."/>
            <person name="Swanson S.K."/>
            <person name="Velmurugan S."/>
            <person name="Chen R."/>
            <person name="Washburn M.P."/>
            <person name="Liu X.S."/>
            <person name="DeCaprio J.A."/>
        </authorList>
    </citation>
    <scope>IDENTIFICATION IN THE DREAM COMPLEX</scope>
</reference>
<reference key="8">
    <citation type="journal article" date="2008" name="J. Proteome Res.">
        <title>Combining protein-based IMAC, peptide-based IMAC, and MudPIT for efficient phosphoproteomic analysis.</title>
        <authorList>
            <person name="Cantin G.T."/>
            <person name="Yi W."/>
            <person name="Lu B."/>
            <person name="Park S.K."/>
            <person name="Xu T."/>
            <person name="Lee J.-D."/>
            <person name="Yates J.R. III"/>
        </authorList>
    </citation>
    <scope>PHOSPHORYLATION [LARGE SCALE ANALYSIS] AT SER-309 AND SER-321</scope>
    <scope>IDENTIFICATION BY MASS SPECTROMETRY [LARGE SCALE ANALYSIS]</scope>
    <source>
        <tissue>Cervix carcinoma</tissue>
    </source>
</reference>
<reference key="9">
    <citation type="journal article" date="2008" name="Mol. Cell">
        <title>Kinase-selective enrichment enables quantitative phosphoproteomics of the kinome across the cell cycle.</title>
        <authorList>
            <person name="Daub H."/>
            <person name="Olsen J.V."/>
            <person name="Bairlein M."/>
            <person name="Gnad F."/>
            <person name="Oppermann F.S."/>
            <person name="Korner R."/>
            <person name="Greff Z."/>
            <person name="Keri G."/>
            <person name="Stemmann O."/>
            <person name="Mann M."/>
        </authorList>
    </citation>
    <scope>PHOSPHORYLATION [LARGE SCALE ANALYSIS] AT SER-309 AND SER-321</scope>
    <scope>IDENTIFICATION BY MASS SPECTROMETRY [LARGE SCALE ANALYSIS]</scope>
    <source>
        <tissue>Cervix carcinoma</tissue>
    </source>
</reference>
<reference key="10">
    <citation type="journal article" date="2008" name="Proc. Natl. Acad. Sci. U.S.A.">
        <title>A quantitative atlas of mitotic phosphorylation.</title>
        <authorList>
            <person name="Dephoure N."/>
            <person name="Zhou C."/>
            <person name="Villen J."/>
            <person name="Beausoleil S.A."/>
            <person name="Bakalarski C.E."/>
            <person name="Elledge S.J."/>
            <person name="Gygi S.P."/>
        </authorList>
    </citation>
    <scope>PHOSPHORYLATION [LARGE SCALE ANALYSIS] AT SER-309 AND SER-321</scope>
    <scope>IDENTIFICATION BY MASS SPECTROMETRY [LARGE SCALE ANALYSIS]</scope>
    <source>
        <tissue>Cervix carcinoma</tissue>
    </source>
</reference>
<reference key="11">
    <citation type="journal article" date="2009" name="Anal. Chem.">
        <title>Lys-N and trypsin cover complementary parts of the phosphoproteome in a refined SCX-based approach.</title>
        <authorList>
            <person name="Gauci S."/>
            <person name="Helbig A.O."/>
            <person name="Slijper M."/>
            <person name="Krijgsveld J."/>
            <person name="Heck A.J."/>
            <person name="Mohammed S."/>
        </authorList>
    </citation>
    <scope>ACETYLATION [LARGE SCALE ANALYSIS] AT ALA-2</scope>
    <scope>CLEAVAGE OF INITIATOR METHIONINE [LARGE SCALE ANALYSIS]</scope>
    <scope>IDENTIFICATION BY MASS SPECTROMETRY [LARGE SCALE ANALYSIS]</scope>
</reference>
<reference key="12">
    <citation type="journal article" date="2009" name="Sci. Signal.">
        <title>Quantitative phosphoproteomic analysis of T cell receptor signaling reveals system-wide modulation of protein-protein interactions.</title>
        <authorList>
            <person name="Mayya V."/>
            <person name="Lundgren D.H."/>
            <person name="Hwang S.-I."/>
            <person name="Rezaul K."/>
            <person name="Wu L."/>
            <person name="Eng J.K."/>
            <person name="Rodionov V."/>
            <person name="Han D.K."/>
        </authorList>
    </citation>
    <scope>PHOSPHORYLATION [LARGE SCALE ANALYSIS] AT SER-309 AND SER-321</scope>
    <scope>IDENTIFICATION BY MASS SPECTROMETRY [LARGE SCALE ANALYSIS]</scope>
    <source>
        <tissue>Leukemic T-cell</tissue>
    </source>
</reference>
<reference key="13">
    <citation type="journal article" date="2010" name="Sci. Signal.">
        <title>Quantitative phosphoproteomics reveals widespread full phosphorylation site occupancy during mitosis.</title>
        <authorList>
            <person name="Olsen J.V."/>
            <person name="Vermeulen M."/>
            <person name="Santamaria A."/>
            <person name="Kumar C."/>
            <person name="Miller M.L."/>
            <person name="Jensen L.J."/>
            <person name="Gnad F."/>
            <person name="Cox J."/>
            <person name="Jensen T.S."/>
            <person name="Nigg E.A."/>
            <person name="Brunak S."/>
            <person name="Mann M."/>
        </authorList>
    </citation>
    <scope>PHOSPHORYLATION [LARGE SCALE ANALYSIS] AT SER-65; THR-304; SER-309 AND SER-321</scope>
    <scope>IDENTIFICATION BY MASS SPECTROMETRY [LARGE SCALE ANALYSIS]</scope>
    <source>
        <tissue>Cervix carcinoma</tissue>
    </source>
</reference>
<reference key="14">
    <citation type="journal article" date="2013" name="J. Proteome Res.">
        <title>Toward a comprehensive characterization of a human cancer cell phosphoproteome.</title>
        <authorList>
            <person name="Zhou H."/>
            <person name="Di Palma S."/>
            <person name="Preisinger C."/>
            <person name="Peng M."/>
            <person name="Polat A.N."/>
            <person name="Heck A.J."/>
            <person name="Mohammed S."/>
        </authorList>
    </citation>
    <scope>PHOSPHORYLATION [LARGE SCALE ANALYSIS] AT SER-65 AND THR-96</scope>
    <scope>IDENTIFICATION BY MASS SPECTROMETRY [LARGE SCALE ANALYSIS]</scope>
    <source>
        <tissue>Cervix carcinoma</tissue>
        <tissue>Erythroleukemia</tissue>
    </source>
</reference>
<reference key="15">
    <citation type="journal article" date="2017" name="Nat. Struct. Mol. Biol.">
        <title>Site-specific mapping of the human SUMO proteome reveals co-modification with phosphorylation.</title>
        <authorList>
            <person name="Hendriks I.A."/>
            <person name="Lyon D."/>
            <person name="Young C."/>
            <person name="Jensen L.J."/>
            <person name="Vertegaal A.C."/>
            <person name="Nielsen M.L."/>
        </authorList>
    </citation>
    <scope>SUMOYLATION [LARGE SCALE ANALYSIS] AT LYS-21</scope>
    <scope>IDENTIFICATION BY MASS SPECTROMETRY [LARGE SCALE ANALYSIS]</scope>
</reference>
<accession>Q5TKA1</accession>
<accession>Q5U5L8</accession>
<accession>Q5U7E1</accession>
<accession>Q6PI55</accession>
<accession>Q6ZTV4</accession>
<accession>Q7Z3J1</accession>
<proteinExistence type="evidence at protein level"/>
<keyword id="KW-0002">3D-structure</keyword>
<keyword id="KW-0007">Acetylation</keyword>
<keyword id="KW-0025">Alternative splicing</keyword>
<keyword id="KW-0131">Cell cycle</keyword>
<keyword id="KW-0175">Coiled coil</keyword>
<keyword id="KW-0237">DNA synthesis</keyword>
<keyword id="KW-1017">Isopeptide bond</keyword>
<keyword id="KW-0539">Nucleus</keyword>
<keyword id="KW-0597">Phosphoprotein</keyword>
<keyword id="KW-1267">Proteomics identification</keyword>
<keyword id="KW-1185">Reference proteome</keyword>
<keyword id="KW-0043">Tumor suppressor</keyword>
<keyword id="KW-0832">Ubl conjugation</keyword>
<evidence type="ECO:0000250" key="1">
    <source>
        <dbReference type="UniProtKB" id="Q8C735"/>
    </source>
</evidence>
<evidence type="ECO:0000255" key="2"/>
<evidence type="ECO:0000269" key="3">
    <source>
    </source>
</evidence>
<evidence type="ECO:0000269" key="4">
    <source>
    </source>
</evidence>
<evidence type="ECO:0000269" key="5">
    <source>
    </source>
</evidence>
<evidence type="ECO:0000269" key="6">
    <source>
    </source>
</evidence>
<evidence type="ECO:0000303" key="7">
    <source>
    </source>
</evidence>
<evidence type="ECO:0000303" key="8">
    <source>
    </source>
</evidence>
<evidence type="ECO:0000303" key="9">
    <source>
    </source>
</evidence>
<evidence type="ECO:0000305" key="10"/>
<evidence type="ECO:0007744" key="11">
    <source>
    </source>
</evidence>
<evidence type="ECO:0007744" key="12">
    <source>
    </source>
</evidence>
<evidence type="ECO:0007744" key="13">
    <source>
    </source>
</evidence>
<evidence type="ECO:0007744" key="14">
    <source>
    </source>
</evidence>
<evidence type="ECO:0007744" key="15">
    <source>
    </source>
</evidence>
<evidence type="ECO:0007744" key="16">
    <source>
    </source>
</evidence>
<evidence type="ECO:0007744" key="17">
    <source>
    </source>
</evidence>
<evidence type="ECO:0007744" key="18">
    <source>
    </source>
</evidence>
<evidence type="ECO:0007829" key="19">
    <source>
        <dbReference type="PDB" id="6C48"/>
    </source>
</evidence>
<evidence type="ECO:0007829" key="20">
    <source>
        <dbReference type="PDB" id="7N40"/>
    </source>
</evidence>
<evidence type="ECO:0007829" key="21">
    <source>
        <dbReference type="PDB" id="7R1D"/>
    </source>
</evidence>
<dbReference type="EMBL" id="AY786184">
    <property type="protein sequence ID" value="AAV41873.1"/>
    <property type="molecule type" value="mRNA"/>
</dbReference>
<dbReference type="EMBL" id="AF190323">
    <property type="protein sequence ID" value="AAQ13710.1"/>
    <property type="molecule type" value="mRNA"/>
</dbReference>
<dbReference type="EMBL" id="AF190324">
    <property type="protein sequence ID" value="AAQ13711.1"/>
    <property type="molecule type" value="mRNA"/>
</dbReference>
<dbReference type="EMBL" id="AK126177">
    <property type="protein sequence ID" value="BAC86475.1"/>
    <property type="molecule type" value="mRNA"/>
</dbReference>
<dbReference type="EMBL" id="BX537869">
    <property type="protein sequence ID" value="CAD97871.1"/>
    <property type="status" value="ALT_INIT"/>
    <property type="molecule type" value="mRNA"/>
</dbReference>
<dbReference type="EMBL" id="BC043444">
    <property type="protein sequence ID" value="AAH43444.1"/>
    <property type="status" value="ALT_INIT"/>
    <property type="molecule type" value="mRNA"/>
</dbReference>
<dbReference type="EMBL" id="BC045625">
    <property type="protein sequence ID" value="AAH45625.1"/>
    <property type="molecule type" value="mRNA"/>
</dbReference>
<dbReference type="CCDS" id="CCDS1553.1">
    <molecule id="Q5TKA1-2"/>
</dbReference>
<dbReference type="CCDS" id="CCDS91165.1">
    <molecule id="Q5TKA1-1"/>
</dbReference>
<dbReference type="RefSeq" id="NP_001257338.1">
    <property type="nucleotide sequence ID" value="NM_001270409.1"/>
</dbReference>
<dbReference type="RefSeq" id="NP_001257339.1">
    <property type="nucleotide sequence ID" value="NM_001270410.1"/>
</dbReference>
<dbReference type="RefSeq" id="NP_001353174.1">
    <molecule id="Q5TKA1-1"/>
    <property type="nucleotide sequence ID" value="NM_001366245.2"/>
</dbReference>
<dbReference type="RefSeq" id="NP_775106.2">
    <molecule id="Q5TKA1-2"/>
    <property type="nucleotide sequence ID" value="NM_173083.3"/>
</dbReference>
<dbReference type="PDB" id="6C48">
    <property type="method" value="X-ray"/>
    <property type="resolution" value="2.32 A"/>
    <property type="chains" value="A/D=333-450"/>
</dbReference>
<dbReference type="PDB" id="7N40">
    <property type="method" value="X-ray"/>
    <property type="resolution" value="2.55 A"/>
    <property type="chains" value="B=95-274"/>
</dbReference>
<dbReference type="PDB" id="7R1D">
    <property type="method" value="EM"/>
    <property type="resolution" value="3.50 A"/>
    <property type="chains" value="C=1-542"/>
</dbReference>
<dbReference type="PDBsum" id="6C48"/>
<dbReference type="PDBsum" id="7N40"/>
<dbReference type="PDBsum" id="7R1D"/>
<dbReference type="EMDB" id="EMD-14239"/>
<dbReference type="SMR" id="Q5TKA1"/>
<dbReference type="BioGRID" id="130420">
    <property type="interactions" value="113"/>
</dbReference>
<dbReference type="ComplexPortal" id="CPX-2366">
    <property type="entry name" value="Myb-MuvB transcriptional activation complex"/>
</dbReference>
<dbReference type="ComplexPortal" id="CPX-2368">
    <property type="entry name" value="DREAM transcriptional repressor complex, RBL1 variant"/>
</dbReference>
<dbReference type="ComplexPortal" id="CPX-7461">
    <property type="entry name" value="DREAM transcriptional repressor complex, RBL2 variant"/>
</dbReference>
<dbReference type="ComplexPortal" id="CPX-7462">
    <property type="entry name" value="Myb-MuvB-FOXM1 transcriptional activation complex"/>
</dbReference>
<dbReference type="CORUM" id="Q5TKA1"/>
<dbReference type="FunCoup" id="Q5TKA1">
    <property type="interactions" value="1921"/>
</dbReference>
<dbReference type="IntAct" id="Q5TKA1">
    <property type="interactions" value="51"/>
</dbReference>
<dbReference type="MINT" id="Q5TKA1"/>
<dbReference type="STRING" id="9606.ENSP00000329102"/>
<dbReference type="GlyGen" id="Q5TKA1">
    <property type="glycosylation" value="1 site, 1 O-linked glycan (1 site)"/>
</dbReference>
<dbReference type="iPTMnet" id="Q5TKA1"/>
<dbReference type="PhosphoSitePlus" id="Q5TKA1"/>
<dbReference type="BioMuta" id="LIN9"/>
<dbReference type="DMDM" id="74708186"/>
<dbReference type="jPOST" id="Q5TKA1"/>
<dbReference type="MassIVE" id="Q5TKA1"/>
<dbReference type="PaxDb" id="9606-ENSP00000329102"/>
<dbReference type="PeptideAtlas" id="Q5TKA1"/>
<dbReference type="ProteomicsDB" id="65201">
    <molecule id="Q5TKA1-1"/>
</dbReference>
<dbReference type="ProteomicsDB" id="65202">
    <molecule id="Q5TKA1-2"/>
</dbReference>
<dbReference type="ProteomicsDB" id="65203">
    <molecule id="Q5TKA1-3"/>
</dbReference>
<dbReference type="Pumba" id="Q5TKA1"/>
<dbReference type="Antibodypedia" id="34650">
    <property type="antibodies" value="143 antibodies from 25 providers"/>
</dbReference>
<dbReference type="DNASU" id="286826"/>
<dbReference type="Ensembl" id="ENST00000328205.9">
    <molecule id="Q5TKA1-2"/>
    <property type="protein sequence ID" value="ENSP00000329102.5"/>
    <property type="gene ID" value="ENSG00000183814.16"/>
</dbReference>
<dbReference type="Ensembl" id="ENST00000681046.1">
    <molecule id="Q5TKA1-1"/>
    <property type="protein sequence ID" value="ENSP00000505590.1"/>
    <property type="gene ID" value="ENSG00000183814.16"/>
</dbReference>
<dbReference type="GeneID" id="286826"/>
<dbReference type="KEGG" id="hsa:286826"/>
<dbReference type="MANE-Select" id="ENST00000681046.1">
    <property type="protein sequence ID" value="ENSP00000505590.1"/>
    <property type="RefSeq nucleotide sequence ID" value="NM_001366245.2"/>
    <property type="RefSeq protein sequence ID" value="NP_001353174.1"/>
</dbReference>
<dbReference type="UCSC" id="uc001hqa.4">
    <molecule id="Q5TKA1-1"/>
    <property type="organism name" value="human"/>
</dbReference>
<dbReference type="AGR" id="HGNC:30830"/>
<dbReference type="CTD" id="286826"/>
<dbReference type="DisGeNET" id="286826"/>
<dbReference type="GeneCards" id="LIN9"/>
<dbReference type="HGNC" id="HGNC:30830">
    <property type="gene designation" value="LIN9"/>
</dbReference>
<dbReference type="HPA" id="ENSG00000183814">
    <property type="expression patterns" value="Low tissue specificity"/>
</dbReference>
<dbReference type="MIM" id="609375">
    <property type="type" value="gene"/>
</dbReference>
<dbReference type="neXtProt" id="NX_Q5TKA1"/>
<dbReference type="OpenTargets" id="ENSG00000183814"/>
<dbReference type="PharmGKB" id="PA134970771"/>
<dbReference type="VEuPathDB" id="HostDB:ENSG00000183814"/>
<dbReference type="eggNOG" id="KOG1019">
    <property type="taxonomic scope" value="Eukaryota"/>
</dbReference>
<dbReference type="GeneTree" id="ENSGT00390000003188"/>
<dbReference type="InParanoid" id="Q5TKA1"/>
<dbReference type="OMA" id="KEEMIPP"/>
<dbReference type="OrthoDB" id="2339771at2759"/>
<dbReference type="PAN-GO" id="Q5TKA1">
    <property type="GO annotations" value="5 GO annotations based on evolutionary models"/>
</dbReference>
<dbReference type="PhylomeDB" id="Q5TKA1"/>
<dbReference type="TreeFam" id="TF314315"/>
<dbReference type="PathwayCommons" id="Q5TKA1"/>
<dbReference type="Reactome" id="R-HSA-1362277">
    <property type="pathway name" value="Transcription of E2F targets under negative control by DREAM complex"/>
</dbReference>
<dbReference type="Reactome" id="R-HSA-1362300">
    <property type="pathway name" value="Transcription of E2F targets under negative control by p107 (RBL1) and p130 (RBL2) in complex with HDAC1"/>
</dbReference>
<dbReference type="Reactome" id="R-HSA-1538133">
    <property type="pathway name" value="G0 and Early G1"/>
</dbReference>
<dbReference type="Reactome" id="R-HSA-156711">
    <property type="pathway name" value="Polo-like kinase mediated events"/>
</dbReference>
<dbReference type="Reactome" id="R-HSA-69202">
    <property type="pathway name" value="Cyclin E associated events during G1/S transition"/>
</dbReference>
<dbReference type="Reactome" id="R-HSA-69205">
    <property type="pathway name" value="G1/S-Specific Transcription"/>
</dbReference>
<dbReference type="Reactome" id="R-HSA-69656">
    <property type="pathway name" value="Cyclin A:Cdk2-associated events at S phase entry"/>
</dbReference>
<dbReference type="SignaLink" id="Q5TKA1"/>
<dbReference type="SIGNOR" id="Q5TKA1"/>
<dbReference type="BioGRID-ORCS" id="286826">
    <property type="hits" value="326 hits in 1170 CRISPR screens"/>
</dbReference>
<dbReference type="ChiTaRS" id="LIN9">
    <property type="organism name" value="human"/>
</dbReference>
<dbReference type="GeneWiki" id="LIN9"/>
<dbReference type="GenomeRNAi" id="286826"/>
<dbReference type="Pharos" id="Q5TKA1">
    <property type="development level" value="Tbio"/>
</dbReference>
<dbReference type="PRO" id="PR:Q5TKA1"/>
<dbReference type="Proteomes" id="UP000005640">
    <property type="component" value="Chromosome 1"/>
</dbReference>
<dbReference type="RNAct" id="Q5TKA1">
    <property type="molecule type" value="protein"/>
</dbReference>
<dbReference type="Bgee" id="ENSG00000183814">
    <property type="expression patterns" value="Expressed in ventricular zone and 126 other cell types or tissues"/>
</dbReference>
<dbReference type="ExpressionAtlas" id="Q5TKA1">
    <property type="expression patterns" value="baseline and differential"/>
</dbReference>
<dbReference type="GO" id="GO:0005654">
    <property type="term" value="C:nucleoplasm"/>
    <property type="evidence" value="ECO:0000314"/>
    <property type="project" value="HPA"/>
</dbReference>
<dbReference type="GO" id="GO:0017053">
    <property type="term" value="C:transcription repressor complex"/>
    <property type="evidence" value="ECO:0007669"/>
    <property type="project" value="InterPro"/>
</dbReference>
<dbReference type="GO" id="GO:0003677">
    <property type="term" value="F:DNA binding"/>
    <property type="evidence" value="ECO:0000318"/>
    <property type="project" value="GO_Central"/>
</dbReference>
<dbReference type="GO" id="GO:0071897">
    <property type="term" value="P:DNA biosynthetic process"/>
    <property type="evidence" value="ECO:0007669"/>
    <property type="project" value="UniProtKB-KW"/>
</dbReference>
<dbReference type="GO" id="GO:0006351">
    <property type="term" value="P:DNA-templated transcription"/>
    <property type="evidence" value="ECO:0007669"/>
    <property type="project" value="InterPro"/>
</dbReference>
<dbReference type="GO" id="GO:0051726">
    <property type="term" value="P:regulation of cell cycle"/>
    <property type="evidence" value="ECO:0000318"/>
    <property type="project" value="GO_Central"/>
</dbReference>
<dbReference type="GO" id="GO:0006357">
    <property type="term" value="P:regulation of transcription by RNA polymerase II"/>
    <property type="evidence" value="ECO:0000318"/>
    <property type="project" value="GO_Central"/>
</dbReference>
<dbReference type="InterPro" id="IPR033471">
    <property type="entry name" value="DIRP"/>
</dbReference>
<dbReference type="InterPro" id="IPR010561">
    <property type="entry name" value="LIN-9/ALY1"/>
</dbReference>
<dbReference type="InterPro" id="IPR045831">
    <property type="entry name" value="LIN9_C"/>
</dbReference>
<dbReference type="PANTHER" id="PTHR21689">
    <property type="entry name" value="LIN-9"/>
    <property type="match status" value="1"/>
</dbReference>
<dbReference type="PANTHER" id="PTHR21689:SF2">
    <property type="entry name" value="PROTEIN LIN-9 HOMOLOG"/>
    <property type="match status" value="1"/>
</dbReference>
<dbReference type="Pfam" id="PF06584">
    <property type="entry name" value="DIRP"/>
    <property type="match status" value="1"/>
</dbReference>
<dbReference type="Pfam" id="PF19438">
    <property type="entry name" value="LIN9_C"/>
    <property type="match status" value="1"/>
</dbReference>
<dbReference type="SMART" id="SM01135">
    <property type="entry name" value="DIRP"/>
    <property type="match status" value="1"/>
</dbReference>
<organism>
    <name type="scientific">Homo sapiens</name>
    <name type="common">Human</name>
    <dbReference type="NCBI Taxonomy" id="9606"/>
    <lineage>
        <taxon>Eukaryota</taxon>
        <taxon>Metazoa</taxon>
        <taxon>Chordata</taxon>
        <taxon>Craniata</taxon>
        <taxon>Vertebrata</taxon>
        <taxon>Euteleostomi</taxon>
        <taxon>Mammalia</taxon>
        <taxon>Eutheria</taxon>
        <taxon>Euarchontoglires</taxon>
        <taxon>Primates</taxon>
        <taxon>Haplorrhini</taxon>
        <taxon>Catarrhini</taxon>
        <taxon>Hominidae</taxon>
        <taxon>Homo</taxon>
    </lineage>
</organism>
<protein>
    <recommendedName>
        <fullName>Protein lin-9 homolog</fullName>
        <shortName>HuLin-9</shortName>
        <shortName>hLin-9</shortName>
    </recommendedName>
    <alternativeName>
        <fullName>Beta subunit-associated regulator of apoptosis</fullName>
    </alternativeName>
    <alternativeName>
        <fullName>TUDOR gene similar protein</fullName>
    </alternativeName>
    <alternativeName>
        <fullName>Type I interferon receptor beta chain-associated protein</fullName>
    </alternativeName>
    <alternativeName>
        <fullName>pRB-associated protein</fullName>
    </alternativeName>
</protein>
<sequence>MAELDQLPDESSSAKALVSLKEGSLSNTWNEKYSSLQKTPVWKGRNTSSAVEMPFRNSKRSRLFSDEDDRQINTRSPKRNQRVAMVPQKFTATMSTPDKKASQKIGFRLRNLLKLPKAHKWCIYEWFYSNIDKPLFEGDNDFCVCLKESFPNLKTRKLTRVEWGKIRRLMGKPRRCSSAFFEEERSALKQKRQKIRLLQQRKVADVSQFKDLPDEIPLPLVIGTKVTARLRGVHDGLFTGQIDAVDTLNATYRVTFDRTGLGTHTIPDYEVLSNEPHETMPIAAFGQKQRPSRFFMTPPRLHYTPPLQSPIIDNDPLLGQSPWRSKISGSDTETLGGFPVEFLIQVTRLSKILMIKKEHIKKLREMNTEAEKLKSYSMPISIEFQRRYATIVLELEQLNKDLNKVLHKVQQYCYELAPDQGLQPADQPTDMRRRCEEEAQEIVRHANSSTGQPCVENENLTDLISRLTAILLQIKCLAEGGDLNSFEFKSLTDSLNDIKSTIDASNISCFQNNVEIHVAHIQSGLSQMGNLHAFAANNTNRD</sequence>
<feature type="initiator methionine" description="Removed" evidence="14">
    <location>
        <position position="1"/>
    </location>
</feature>
<feature type="chain" id="PRO_0000249546" description="Protein lin-9 homolog">
    <location>
        <begin position="2"/>
        <end position="542"/>
    </location>
</feature>
<feature type="region of interest" description="Sufficient for interaction with RB1" evidence="3">
    <location>
        <begin position="2"/>
        <end position="296"/>
    </location>
</feature>
<feature type="coiled-coil region" evidence="2">
    <location>
        <begin position="354"/>
        <end position="413"/>
    </location>
</feature>
<feature type="modified residue" description="N-acetylalanine" evidence="14">
    <location>
        <position position="2"/>
    </location>
</feature>
<feature type="modified residue" description="Phosphoserine" evidence="16 17">
    <location>
        <position position="65"/>
    </location>
</feature>
<feature type="modified residue" description="Phosphoserine" evidence="1">
    <location>
        <position position="95"/>
    </location>
</feature>
<feature type="modified residue" description="Phosphothreonine" evidence="17">
    <location>
        <position position="96"/>
    </location>
</feature>
<feature type="modified residue" description="Phosphothreonine" evidence="16">
    <location>
        <position position="304"/>
    </location>
</feature>
<feature type="modified residue" description="Phosphoserine" evidence="11 12 13 15 16">
    <location>
        <position position="309"/>
    </location>
</feature>
<feature type="modified residue" description="Phosphoserine" evidence="11 12 13 15 16">
    <location>
        <position position="321"/>
    </location>
</feature>
<feature type="cross-link" description="Glycyl lysine isopeptide (Lys-Gly) (interchain with G-Cter in SUMO2)" evidence="18">
    <location>
        <position position="21"/>
    </location>
</feature>
<feature type="splice variant" id="VSP_020509" description="In isoform 2." evidence="8">
    <original>M</original>
    <variation>MHRGGQPLKKRRGSFKM</variation>
    <location>
        <position position="1"/>
    </location>
</feature>
<feature type="splice variant" id="VSP_020510" description="In isoform 3." evidence="7 9">
    <location>
        <begin position="54"/>
        <end position="88"/>
    </location>
</feature>
<feature type="sequence conflict" description="In Ref. 5; AAH43444." evidence="10" ref="5">
    <original>E</original>
    <variation>V</variation>
    <location>
        <position position="436"/>
    </location>
</feature>
<feature type="sequence conflict" description="In Ref. 1; AAV41873." evidence="10" ref="1">
    <original>S</original>
    <variation>R</variation>
    <location>
        <position position="508"/>
    </location>
</feature>
<feature type="helix" evidence="20">
    <location>
        <begin position="99"/>
        <end position="113"/>
    </location>
</feature>
<feature type="helix" evidence="20">
    <location>
        <begin position="116"/>
        <end position="126"/>
    </location>
</feature>
<feature type="helix" evidence="20">
    <location>
        <begin position="132"/>
        <end position="137"/>
    </location>
</feature>
<feature type="helix" evidence="20">
    <location>
        <begin position="141"/>
        <end position="149"/>
    </location>
</feature>
<feature type="strand" evidence="21">
    <location>
        <begin position="156"/>
        <end position="158"/>
    </location>
</feature>
<feature type="helix" evidence="20">
    <location>
        <begin position="160"/>
        <end position="170"/>
    </location>
</feature>
<feature type="helix" evidence="20">
    <location>
        <begin position="178"/>
        <end position="197"/>
    </location>
</feature>
<feature type="turn" evidence="21">
    <location>
        <begin position="199"/>
        <end position="201"/>
    </location>
</feature>
<feature type="strand" evidence="20">
    <location>
        <begin position="225"/>
        <end position="229"/>
    </location>
</feature>
<feature type="strand" evidence="21">
    <location>
        <begin position="232"/>
        <end position="234"/>
    </location>
</feature>
<feature type="strand" evidence="20">
    <location>
        <begin position="236"/>
        <end position="246"/>
    </location>
</feature>
<feature type="turn" evidence="20">
    <location>
        <begin position="247"/>
        <end position="250"/>
    </location>
</feature>
<feature type="strand" evidence="20">
    <location>
        <begin position="251"/>
        <end position="256"/>
    </location>
</feature>
<feature type="turn" evidence="21">
    <location>
        <begin position="259"/>
        <end position="261"/>
    </location>
</feature>
<feature type="strand" evidence="20">
    <location>
        <begin position="263"/>
        <end position="267"/>
    </location>
</feature>
<feature type="helix" evidence="20">
    <location>
        <begin position="268"/>
        <end position="270"/>
    </location>
</feature>
<feature type="strand" evidence="20">
    <location>
        <begin position="271"/>
        <end position="273"/>
    </location>
</feature>
<feature type="helix" evidence="21">
    <location>
        <begin position="282"/>
        <end position="285"/>
    </location>
</feature>
<feature type="helix" evidence="19">
    <location>
        <begin position="340"/>
        <end position="375"/>
    </location>
</feature>
<feature type="helix" evidence="19">
    <location>
        <begin position="382"/>
        <end position="412"/>
    </location>
</feature>
<name>LIN9_HUMAN</name>